<accession>P20492</accession>
<reference key="1">
    <citation type="journal article" date="1990" name="Virology">
        <title>The complete DNA sequence of vaccinia virus.</title>
        <authorList>
            <person name="Goebel S.J."/>
            <person name="Johnson G.P."/>
            <person name="Perkus M.E."/>
            <person name="Davis S.W."/>
            <person name="Winslow J.P."/>
            <person name="Paoletti E."/>
        </authorList>
    </citation>
    <scope>NUCLEOTIDE SEQUENCE [LARGE SCALE GENOMIC DNA]</scope>
</reference>
<reference key="2">
    <citation type="journal article" date="1990" name="Virology">
        <title>Appendix to 'The complete DNA sequence of vaccinia virus'.</title>
        <authorList>
            <person name="Goebel S.J."/>
            <person name="Johnson G.P."/>
            <person name="Perkus M.E."/>
            <person name="Davis S.W."/>
            <person name="Winslow J.P."/>
            <person name="Paoletti E."/>
        </authorList>
    </citation>
    <scope>NUCLEOTIDE SEQUENCE [LARGE SCALE GENOMIC DNA]</scope>
</reference>
<reference key="3">
    <citation type="journal article" date="1990" name="Virology">
        <title>A DNA ligase gene in the Copenhagen strain of vaccinia virus is nonessential for viral replication and recombination.</title>
        <authorList>
            <person name="Colinas R.J."/>
            <person name="Goebel S.J."/>
            <person name="Davis S.W."/>
            <person name="Johnson G.P."/>
            <person name="Norton E.K."/>
            <person name="Paoletti E."/>
        </authorList>
    </citation>
    <scope>CHARACTERIZATION</scope>
</reference>
<organism>
    <name type="scientific">Vaccinia virus (strain Copenhagen)</name>
    <name type="common">VACV</name>
    <dbReference type="NCBI Taxonomy" id="10249"/>
    <lineage>
        <taxon>Viruses</taxon>
        <taxon>Varidnaviria</taxon>
        <taxon>Bamfordvirae</taxon>
        <taxon>Nucleocytoviricota</taxon>
        <taxon>Pokkesviricetes</taxon>
        <taxon>Chitovirales</taxon>
        <taxon>Poxviridae</taxon>
        <taxon>Chordopoxvirinae</taxon>
        <taxon>Orthopoxvirus</taxon>
        <taxon>Vaccinia virus</taxon>
    </lineage>
</organism>
<name>DNLI_VACCC</name>
<protein>
    <recommendedName>
        <fullName>DNA ligase</fullName>
        <ecNumber evidence="3">6.5.1.1</ecNumber>
    </recommendedName>
    <alternativeName>
        <fullName>Polydeoxyribonucleotide synthase [ATP]</fullName>
    </alternativeName>
</protein>
<comment type="function">
    <text evidence="1">DNA ligase that seals nicks in double-stranded DNA during DNA replication, DNA recombination and DNA repair. Recruits cellular topoisomerase II to sites of viral replication and assembly.</text>
</comment>
<comment type="catalytic activity">
    <reaction evidence="3">
        <text>ATP + (deoxyribonucleotide)n-3'-hydroxyl + 5'-phospho-(deoxyribonucleotide)m = (deoxyribonucleotide)n+m + AMP + diphosphate.</text>
        <dbReference type="EC" id="6.5.1.1"/>
    </reaction>
</comment>
<comment type="cofactor">
    <cofactor evidence="2">
        <name>Mg(2+)</name>
        <dbReference type="ChEBI" id="CHEBI:18420"/>
    </cofactor>
</comment>
<comment type="subunit">
    <text evidence="1">Interacts with host TOP2A and TOP2B.</text>
</comment>
<comment type="subcellular location">
    <subcellularLocation>
        <location evidence="1">Host cytoplasm</location>
    </subcellularLocation>
    <text evidence="1">Found in sites viral of replication and assembly.</text>
</comment>
<comment type="induction">
    <text>Expressed in the early phase of the viral replicative cycle.</text>
</comment>
<comment type="similarity">
    <text evidence="4">Belongs to the ATP-dependent DNA ligase family.</text>
</comment>
<keyword id="KW-0067">ATP-binding</keyword>
<keyword id="KW-0131">Cell cycle</keyword>
<keyword id="KW-0132">Cell division</keyword>
<keyword id="KW-0227">DNA damage</keyword>
<keyword id="KW-0233">DNA recombination</keyword>
<keyword id="KW-0234">DNA repair</keyword>
<keyword id="KW-0235">DNA replication</keyword>
<keyword id="KW-0244">Early protein</keyword>
<keyword id="KW-1035">Host cytoplasm</keyword>
<keyword id="KW-0436">Ligase</keyword>
<keyword id="KW-0460">Magnesium</keyword>
<keyword id="KW-0479">Metal-binding</keyword>
<keyword id="KW-0547">Nucleotide-binding</keyword>
<keyword id="KW-1185">Reference proteome</keyword>
<sequence length="552" mass="63390">MTSLREFRKLCCDIYHASGYKEKSKLIRDFITDRDDKYLIIKLLLPGLDDRIYNMNDKQIIKLYSIIFKQSQEDMLQDLGYGYIGDTIRTFFKENTEIRPRDKSILTLEDVDSFLTTLSSVTKESHQIKLLTDIASVCTCNDLKCVVMLIDKDLKIKAGPRYVLNAISPNAYDVFRKSNNLKEIIENSSKQNLDSISISVMTPINPMLAESCDSVNKAFKKFPSGMFAEVKYDGERVQVHKNNNEFAFFSRNMKPVLSHKVDYLKEYIPKAFKKATSIVLDSEIVLVDEHNVPLPFGSLGIHKKKEYKNSNMCLFVFDCLYFDGFDMTDIPLYERRSFLKDVMVEIPNRIVFSELTNISNESQLTDVLDDALTRKLEGLVLKDINGVYEPGKRRWLKIKRDYLNEGSMADSADLVVLGAYYGKGAKGGIMAVFLMGCYDDESGKWKTVTKCSGHDDNTLRVLQDQLTMIKINKDPKKIPEWLVVNKIYIPDFVVEDPKQSQIWEISGAEFTSSKSHTANGISIRFPRFTRIREDKTWKESTHLNDLVNLTKS</sequence>
<dbReference type="EC" id="6.5.1.1" evidence="3"/>
<dbReference type="EMBL" id="M35027">
    <property type="protein sequence ID" value="AAA48182.1"/>
    <property type="molecule type" value="Genomic_DNA"/>
</dbReference>
<dbReference type="PIR" id="G42522">
    <property type="entry name" value="WMVZ7W"/>
</dbReference>
<dbReference type="SMR" id="P20492"/>
<dbReference type="Proteomes" id="UP000008269">
    <property type="component" value="Segment"/>
</dbReference>
<dbReference type="GO" id="GO:0030430">
    <property type="term" value="C:host cell cytoplasm"/>
    <property type="evidence" value="ECO:0007669"/>
    <property type="project" value="UniProtKB-SubCell"/>
</dbReference>
<dbReference type="GO" id="GO:0005524">
    <property type="term" value="F:ATP binding"/>
    <property type="evidence" value="ECO:0007669"/>
    <property type="project" value="UniProtKB-KW"/>
</dbReference>
<dbReference type="GO" id="GO:0003677">
    <property type="term" value="F:DNA binding"/>
    <property type="evidence" value="ECO:0007669"/>
    <property type="project" value="InterPro"/>
</dbReference>
<dbReference type="GO" id="GO:0003910">
    <property type="term" value="F:DNA ligase (ATP) activity"/>
    <property type="evidence" value="ECO:0007669"/>
    <property type="project" value="UniProtKB-EC"/>
</dbReference>
<dbReference type="GO" id="GO:0046872">
    <property type="term" value="F:metal ion binding"/>
    <property type="evidence" value="ECO:0007669"/>
    <property type="project" value="UniProtKB-KW"/>
</dbReference>
<dbReference type="GO" id="GO:0051301">
    <property type="term" value="P:cell division"/>
    <property type="evidence" value="ECO:0007669"/>
    <property type="project" value="UniProtKB-KW"/>
</dbReference>
<dbReference type="GO" id="GO:0071897">
    <property type="term" value="P:DNA biosynthetic process"/>
    <property type="evidence" value="ECO:0007669"/>
    <property type="project" value="InterPro"/>
</dbReference>
<dbReference type="GO" id="GO:0006310">
    <property type="term" value="P:DNA recombination"/>
    <property type="evidence" value="ECO:0007669"/>
    <property type="project" value="UniProtKB-KW"/>
</dbReference>
<dbReference type="GO" id="GO:0006302">
    <property type="term" value="P:double-strand break repair"/>
    <property type="evidence" value="ECO:0007669"/>
    <property type="project" value="TreeGrafter"/>
</dbReference>
<dbReference type="GO" id="GO:0006273">
    <property type="term" value="P:lagging strand elongation"/>
    <property type="evidence" value="ECO:0007669"/>
    <property type="project" value="TreeGrafter"/>
</dbReference>
<dbReference type="CDD" id="cd07967">
    <property type="entry name" value="OBF_DNA_ligase_III"/>
    <property type="match status" value="1"/>
</dbReference>
<dbReference type="FunFam" id="2.40.50.140:FF:000085">
    <property type="entry name" value="DNA ligase"/>
    <property type="match status" value="1"/>
</dbReference>
<dbReference type="FunFam" id="3.30.470.30:FF:000003">
    <property type="entry name" value="DNA ligase"/>
    <property type="match status" value="1"/>
</dbReference>
<dbReference type="Gene3D" id="3.30.1490.70">
    <property type="match status" value="1"/>
</dbReference>
<dbReference type="Gene3D" id="1.10.3260.10">
    <property type="entry name" value="DNA ligase, ATP-dependent, N-terminal domain"/>
    <property type="match status" value="1"/>
</dbReference>
<dbReference type="Gene3D" id="3.30.470.30">
    <property type="entry name" value="DNA ligase/mRNA capping enzyme"/>
    <property type="match status" value="1"/>
</dbReference>
<dbReference type="Gene3D" id="2.40.50.140">
    <property type="entry name" value="Nucleic acid-binding proteins"/>
    <property type="match status" value="1"/>
</dbReference>
<dbReference type="InterPro" id="IPR050191">
    <property type="entry name" value="ATP-dep_DNA_ligase"/>
</dbReference>
<dbReference type="InterPro" id="IPR000977">
    <property type="entry name" value="DNA_ligase_ATP-dep"/>
</dbReference>
<dbReference type="InterPro" id="IPR012309">
    <property type="entry name" value="DNA_ligase_ATP-dep_C"/>
</dbReference>
<dbReference type="InterPro" id="IPR012310">
    <property type="entry name" value="DNA_ligase_ATP-dep_cent"/>
</dbReference>
<dbReference type="InterPro" id="IPR016059">
    <property type="entry name" value="DNA_ligase_ATP-dep_CS"/>
</dbReference>
<dbReference type="InterPro" id="IPR012308">
    <property type="entry name" value="DNA_ligase_ATP-dep_N"/>
</dbReference>
<dbReference type="InterPro" id="IPR036599">
    <property type="entry name" value="DNA_ligase_N_sf"/>
</dbReference>
<dbReference type="InterPro" id="IPR012340">
    <property type="entry name" value="NA-bd_OB-fold"/>
</dbReference>
<dbReference type="NCBIfam" id="TIGR00574">
    <property type="entry name" value="dnl1"/>
    <property type="match status" value="1"/>
</dbReference>
<dbReference type="PANTHER" id="PTHR45674">
    <property type="entry name" value="DNA LIGASE 1/3 FAMILY MEMBER"/>
    <property type="match status" value="1"/>
</dbReference>
<dbReference type="PANTHER" id="PTHR45674:SF9">
    <property type="entry name" value="DNA LIGASE 3"/>
    <property type="match status" value="1"/>
</dbReference>
<dbReference type="Pfam" id="PF04679">
    <property type="entry name" value="DNA_ligase_A_C"/>
    <property type="match status" value="1"/>
</dbReference>
<dbReference type="Pfam" id="PF01068">
    <property type="entry name" value="DNA_ligase_A_M"/>
    <property type="match status" value="1"/>
</dbReference>
<dbReference type="Pfam" id="PF04675">
    <property type="entry name" value="DNA_ligase_A_N"/>
    <property type="match status" value="1"/>
</dbReference>
<dbReference type="SUPFAM" id="SSF117018">
    <property type="entry name" value="ATP-dependent DNA ligase DNA-binding domain"/>
    <property type="match status" value="1"/>
</dbReference>
<dbReference type="SUPFAM" id="SSF56091">
    <property type="entry name" value="DNA ligase/mRNA capping enzyme, catalytic domain"/>
    <property type="match status" value="1"/>
</dbReference>
<dbReference type="SUPFAM" id="SSF50249">
    <property type="entry name" value="Nucleic acid-binding proteins"/>
    <property type="match status" value="1"/>
</dbReference>
<dbReference type="PROSITE" id="PS00697">
    <property type="entry name" value="DNA_LIGASE_A1"/>
    <property type="match status" value="1"/>
</dbReference>
<dbReference type="PROSITE" id="PS00333">
    <property type="entry name" value="DNA_LIGASE_A2"/>
    <property type="match status" value="1"/>
</dbReference>
<dbReference type="PROSITE" id="PS50160">
    <property type="entry name" value="DNA_LIGASE_A3"/>
    <property type="match status" value="1"/>
</dbReference>
<organismHost>
    <name type="scientific">Homo sapiens</name>
    <name type="common">Human</name>
    <dbReference type="NCBI Taxonomy" id="9606"/>
</organismHost>
<gene>
    <name type="primary">OPG180</name>
    <name type="synonym">LIG</name>
    <name type="ORF">A50R</name>
</gene>
<feature type="chain" id="PRO_0000059588" description="DNA ligase">
    <location>
        <begin position="1"/>
        <end position="552"/>
    </location>
</feature>
<feature type="active site" description="N6-AMP-lysine intermediate" evidence="3">
    <location>
        <position position="231"/>
    </location>
</feature>
<feature type="binding site" evidence="2">
    <location>
        <position position="229"/>
    </location>
    <ligand>
        <name>ATP</name>
        <dbReference type="ChEBI" id="CHEBI:30616"/>
    </ligand>
</feature>
<feature type="binding site" evidence="2">
    <location>
        <position position="236"/>
    </location>
    <ligand>
        <name>ATP</name>
        <dbReference type="ChEBI" id="CHEBI:30616"/>
    </ligand>
</feature>
<feature type="binding site" evidence="2">
    <location>
        <position position="283"/>
    </location>
    <ligand>
        <name>ATP</name>
        <dbReference type="ChEBI" id="CHEBI:30616"/>
    </ligand>
</feature>
<feature type="binding site" evidence="2">
    <location>
        <position position="283"/>
    </location>
    <ligand>
        <name>Mg(2+)</name>
        <dbReference type="ChEBI" id="CHEBI:18420"/>
        <label>1</label>
    </ligand>
</feature>
<feature type="binding site" evidence="2">
    <location>
        <position position="377"/>
    </location>
    <ligand>
        <name>Mg(2+)</name>
        <dbReference type="ChEBI" id="CHEBI:18420"/>
        <label>2</label>
    </ligand>
</feature>
<feature type="binding site" evidence="2">
    <location>
        <position position="382"/>
    </location>
    <ligand>
        <name>ATP</name>
        <dbReference type="ChEBI" id="CHEBI:30616"/>
    </ligand>
</feature>
<feature type="binding site" evidence="2">
    <location>
        <position position="397"/>
    </location>
    <ligand>
        <name>ATP</name>
        <dbReference type="ChEBI" id="CHEBI:30616"/>
    </ligand>
</feature>
<evidence type="ECO:0000250" key="1">
    <source>
        <dbReference type="UniProtKB" id="P16272"/>
    </source>
</evidence>
<evidence type="ECO:0000250" key="2">
    <source>
        <dbReference type="UniProtKB" id="P18858"/>
    </source>
</evidence>
<evidence type="ECO:0000255" key="3">
    <source>
        <dbReference type="PROSITE-ProRule" id="PRU10135"/>
    </source>
</evidence>
<evidence type="ECO:0000305" key="4"/>
<proteinExistence type="evidence at protein level"/>